<name>SP5G_CLOK5</name>
<keyword id="KW-0131">Cell cycle</keyword>
<keyword id="KW-0132">Cell division</keyword>
<keyword id="KW-1185">Reference proteome</keyword>
<keyword id="KW-0717">Septation</keyword>
<gene>
    <name evidence="1" type="primary">spoVG</name>
    <name type="ordered locus">CKL_0145</name>
</gene>
<accession>A5N4I4</accession>
<evidence type="ECO:0000255" key="1">
    <source>
        <dbReference type="HAMAP-Rule" id="MF_00819"/>
    </source>
</evidence>
<protein>
    <recommendedName>
        <fullName evidence="1">Putative septation protein SpoVG</fullName>
    </recommendedName>
</protein>
<dbReference type="EMBL" id="CP000673">
    <property type="protein sequence ID" value="EDK32215.1"/>
    <property type="molecule type" value="Genomic_DNA"/>
</dbReference>
<dbReference type="RefSeq" id="WP_011988741.1">
    <property type="nucleotide sequence ID" value="NC_009706.1"/>
</dbReference>
<dbReference type="SMR" id="A5N4I4"/>
<dbReference type="STRING" id="431943.CKL_0145"/>
<dbReference type="KEGG" id="ckl:CKL_0145"/>
<dbReference type="eggNOG" id="COG2088">
    <property type="taxonomic scope" value="Bacteria"/>
</dbReference>
<dbReference type="HOGENOM" id="CLU_103669_2_1_9"/>
<dbReference type="Proteomes" id="UP000002411">
    <property type="component" value="Chromosome"/>
</dbReference>
<dbReference type="GO" id="GO:0000917">
    <property type="term" value="P:division septum assembly"/>
    <property type="evidence" value="ECO:0007669"/>
    <property type="project" value="UniProtKB-KW"/>
</dbReference>
<dbReference type="GO" id="GO:0030435">
    <property type="term" value="P:sporulation resulting in formation of a cellular spore"/>
    <property type="evidence" value="ECO:0007669"/>
    <property type="project" value="InterPro"/>
</dbReference>
<dbReference type="Gene3D" id="3.30.1120.40">
    <property type="entry name" value="Stage V sporulation protein G"/>
    <property type="match status" value="1"/>
</dbReference>
<dbReference type="HAMAP" id="MF_00819">
    <property type="entry name" value="SpoVG"/>
    <property type="match status" value="1"/>
</dbReference>
<dbReference type="InterPro" id="IPR007170">
    <property type="entry name" value="SpoVG"/>
</dbReference>
<dbReference type="InterPro" id="IPR036751">
    <property type="entry name" value="SpoVG_sf"/>
</dbReference>
<dbReference type="NCBIfam" id="NF009749">
    <property type="entry name" value="PRK13259.1"/>
    <property type="match status" value="1"/>
</dbReference>
<dbReference type="PANTHER" id="PTHR38429">
    <property type="entry name" value="SEPTATION PROTEIN SPOVG-RELATED"/>
    <property type="match status" value="1"/>
</dbReference>
<dbReference type="PANTHER" id="PTHR38429:SF1">
    <property type="entry name" value="SEPTATION PROTEIN SPOVG-RELATED"/>
    <property type="match status" value="1"/>
</dbReference>
<dbReference type="Pfam" id="PF04026">
    <property type="entry name" value="SpoVG"/>
    <property type="match status" value="1"/>
</dbReference>
<dbReference type="SUPFAM" id="SSF160537">
    <property type="entry name" value="SpoVG-like"/>
    <property type="match status" value="1"/>
</dbReference>
<comment type="function">
    <text evidence="1">Could be involved in septation.</text>
</comment>
<comment type="similarity">
    <text evidence="1">Belongs to the SpoVG family.</text>
</comment>
<reference key="1">
    <citation type="journal article" date="2008" name="Proc. Natl. Acad. Sci. U.S.A.">
        <title>The genome of Clostridium kluyveri, a strict anaerobe with unique metabolic features.</title>
        <authorList>
            <person name="Seedorf H."/>
            <person name="Fricke W.F."/>
            <person name="Veith B."/>
            <person name="Brueggemann H."/>
            <person name="Liesegang H."/>
            <person name="Strittmatter A."/>
            <person name="Miethke M."/>
            <person name="Buckel W."/>
            <person name="Hinderberger J."/>
            <person name="Li F."/>
            <person name="Hagemeier C."/>
            <person name="Thauer R.K."/>
            <person name="Gottschalk G."/>
        </authorList>
    </citation>
    <scope>NUCLEOTIDE SEQUENCE [LARGE SCALE GENOMIC DNA]</scope>
    <source>
        <strain>ATCC 8527 / DSM 555 / NBRC 12016 / NCIMB 10680 / K1</strain>
    </source>
</reference>
<proteinExistence type="inferred from homology"/>
<organism>
    <name type="scientific">Clostridium kluyveri (strain ATCC 8527 / DSM 555 / NBRC 12016 / NCIMB 10680 / K1)</name>
    <dbReference type="NCBI Taxonomy" id="431943"/>
    <lineage>
        <taxon>Bacteria</taxon>
        <taxon>Bacillati</taxon>
        <taxon>Bacillota</taxon>
        <taxon>Clostridia</taxon>
        <taxon>Eubacteriales</taxon>
        <taxon>Clostridiaceae</taxon>
        <taxon>Clostridium</taxon>
    </lineage>
</organism>
<feature type="chain" id="PRO_1000083846" description="Putative septation protein SpoVG">
    <location>
        <begin position="1"/>
        <end position="96"/>
    </location>
</feature>
<sequence>MQITDVRVRKIAAEGKMKAIVSVTFDNEFVVHDIKVIEGQNGLFIAMPSRKTPDGEFKDIAHPINTQTREKIQKAILGEYEKVKNEETVTEEKVEE</sequence>